<reference key="1">
    <citation type="submission" date="2008-05" db="EMBL/GenBank/DDBJ databases">
        <title>Genome sequence of Clostridium botulinum Ba4 strain 657.</title>
        <authorList>
            <person name="Shrivastava S."/>
            <person name="Brown J.L."/>
            <person name="Bruce D."/>
            <person name="Detter C."/>
            <person name="Munk C."/>
            <person name="Smith L.A."/>
            <person name="Smith T.J."/>
            <person name="Sutton G."/>
            <person name="Brettin T.S."/>
        </authorList>
    </citation>
    <scope>NUCLEOTIDE SEQUENCE [LARGE SCALE GENOMIC DNA]</scope>
    <source>
        <strain>657 / Type Ba4</strain>
    </source>
</reference>
<comment type="similarity">
    <text evidence="2">Belongs to the UPF0758 family.</text>
</comment>
<protein>
    <recommendedName>
        <fullName>UPF0758 protein CLJ_B3261</fullName>
    </recommendedName>
</protein>
<keyword id="KW-0378">Hydrolase</keyword>
<keyword id="KW-0479">Metal-binding</keyword>
<keyword id="KW-0482">Metalloprotease</keyword>
<keyword id="KW-0645">Protease</keyword>
<keyword id="KW-0862">Zinc</keyword>
<proteinExistence type="inferred from homology"/>
<evidence type="ECO:0000255" key="1">
    <source>
        <dbReference type="PROSITE-ProRule" id="PRU01182"/>
    </source>
</evidence>
<evidence type="ECO:0000305" key="2"/>
<gene>
    <name type="ordered locus">CLJ_B3261</name>
</gene>
<organism>
    <name type="scientific">Clostridium botulinum (strain 657 / Type Ba4)</name>
    <dbReference type="NCBI Taxonomy" id="515621"/>
    <lineage>
        <taxon>Bacteria</taxon>
        <taxon>Bacillati</taxon>
        <taxon>Bacillota</taxon>
        <taxon>Clostridia</taxon>
        <taxon>Eubacteriales</taxon>
        <taxon>Clostridiaceae</taxon>
        <taxon>Clostridium</taxon>
    </lineage>
</organism>
<dbReference type="EMBL" id="CP001083">
    <property type="protein sequence ID" value="ACQ55226.1"/>
    <property type="molecule type" value="Genomic_DNA"/>
</dbReference>
<dbReference type="SMR" id="C3L3L0"/>
<dbReference type="KEGG" id="cbi:CLJ_B3261"/>
<dbReference type="HOGENOM" id="CLU_073529_0_2_9"/>
<dbReference type="Proteomes" id="UP000002333">
    <property type="component" value="Chromosome"/>
</dbReference>
<dbReference type="GO" id="GO:0046872">
    <property type="term" value="F:metal ion binding"/>
    <property type="evidence" value="ECO:0007669"/>
    <property type="project" value="UniProtKB-KW"/>
</dbReference>
<dbReference type="GO" id="GO:0008237">
    <property type="term" value="F:metallopeptidase activity"/>
    <property type="evidence" value="ECO:0007669"/>
    <property type="project" value="UniProtKB-KW"/>
</dbReference>
<dbReference type="GO" id="GO:0006508">
    <property type="term" value="P:proteolysis"/>
    <property type="evidence" value="ECO:0007669"/>
    <property type="project" value="UniProtKB-KW"/>
</dbReference>
<dbReference type="CDD" id="cd08071">
    <property type="entry name" value="MPN_DUF2466"/>
    <property type="match status" value="1"/>
</dbReference>
<dbReference type="Gene3D" id="1.10.150.20">
    <property type="entry name" value="5' to 3' exonuclease, C-terminal subdomain"/>
    <property type="match status" value="1"/>
</dbReference>
<dbReference type="Gene3D" id="3.40.140.10">
    <property type="entry name" value="Cytidine Deaminase, domain 2"/>
    <property type="match status" value="1"/>
</dbReference>
<dbReference type="InterPro" id="IPR037518">
    <property type="entry name" value="MPN"/>
</dbReference>
<dbReference type="InterPro" id="IPR025657">
    <property type="entry name" value="RadC_JAB"/>
</dbReference>
<dbReference type="InterPro" id="IPR010994">
    <property type="entry name" value="RuvA_2-like"/>
</dbReference>
<dbReference type="InterPro" id="IPR001405">
    <property type="entry name" value="UPF0758"/>
</dbReference>
<dbReference type="InterPro" id="IPR020891">
    <property type="entry name" value="UPF0758_CS"/>
</dbReference>
<dbReference type="InterPro" id="IPR046778">
    <property type="entry name" value="UPF0758_N"/>
</dbReference>
<dbReference type="NCBIfam" id="NF000642">
    <property type="entry name" value="PRK00024.1"/>
    <property type="match status" value="1"/>
</dbReference>
<dbReference type="NCBIfam" id="TIGR00608">
    <property type="entry name" value="radc"/>
    <property type="match status" value="1"/>
</dbReference>
<dbReference type="PANTHER" id="PTHR30471">
    <property type="entry name" value="DNA REPAIR PROTEIN RADC"/>
    <property type="match status" value="1"/>
</dbReference>
<dbReference type="PANTHER" id="PTHR30471:SF3">
    <property type="entry name" value="UPF0758 PROTEIN YEES-RELATED"/>
    <property type="match status" value="1"/>
</dbReference>
<dbReference type="Pfam" id="PF04002">
    <property type="entry name" value="RadC"/>
    <property type="match status" value="1"/>
</dbReference>
<dbReference type="Pfam" id="PF20582">
    <property type="entry name" value="UPF0758_N"/>
    <property type="match status" value="1"/>
</dbReference>
<dbReference type="SUPFAM" id="SSF102712">
    <property type="entry name" value="JAB1/MPN domain"/>
    <property type="match status" value="1"/>
</dbReference>
<dbReference type="SUPFAM" id="SSF47781">
    <property type="entry name" value="RuvA domain 2-like"/>
    <property type="match status" value="1"/>
</dbReference>
<dbReference type="PROSITE" id="PS50249">
    <property type="entry name" value="MPN"/>
    <property type="match status" value="1"/>
</dbReference>
<dbReference type="PROSITE" id="PS01302">
    <property type="entry name" value="UPF0758"/>
    <property type="match status" value="1"/>
</dbReference>
<feature type="chain" id="PRO_1000201874" description="UPF0758 protein CLJ_B3261">
    <location>
        <begin position="1"/>
        <end position="228"/>
    </location>
</feature>
<feature type="domain" description="MPN" evidence="1">
    <location>
        <begin position="106"/>
        <end position="228"/>
    </location>
</feature>
<feature type="short sequence motif" description="JAMM motif" evidence="1">
    <location>
        <begin position="177"/>
        <end position="190"/>
    </location>
</feature>
<feature type="binding site" evidence="1">
    <location>
        <position position="177"/>
    </location>
    <ligand>
        <name>Zn(2+)</name>
        <dbReference type="ChEBI" id="CHEBI:29105"/>
        <note>catalytic</note>
    </ligand>
</feature>
<feature type="binding site" evidence="1">
    <location>
        <position position="179"/>
    </location>
    <ligand>
        <name>Zn(2+)</name>
        <dbReference type="ChEBI" id="CHEBI:29105"/>
        <note>catalytic</note>
    </ligand>
</feature>
<feature type="binding site" evidence="1">
    <location>
        <position position="190"/>
    </location>
    <ligand>
        <name>Zn(2+)</name>
        <dbReference type="ChEBI" id="CHEBI:29105"/>
        <note>catalytic</note>
    </ligand>
</feature>
<accession>C3L3L0</accession>
<sequence>MDNNFKIKDLPKNERPQERLIRYGAEVLSNSELLAVILRTGTKNQNIMMLASSLIKETGGLDQLFNQSIEELTKIKGIGVTKAVQILALSELSKRFKTYKSGNEYKISTPLDVSNLVMEDMKYLKQEKLKILILNTKNIVTYIRDVFIGTLNSSIVHPREIFCEAIKKNGASIIICHNHPSGDPTPSKEDINITLRLKECGKLIGIDLLDHIIIGENKYVSMKEKGTI</sequence>
<name>Y3261_CLOB6</name>